<gene>
    <name type="ordered locus">MTH_1598</name>
</gene>
<organism>
    <name type="scientific">Methanothermobacter thermautotrophicus (strain ATCC 29096 / DSM 1053 / JCM 10044 / NBRC 100330 / Delta H)</name>
    <name type="common">Methanobacterium thermoautotrophicum</name>
    <dbReference type="NCBI Taxonomy" id="187420"/>
    <lineage>
        <taxon>Archaea</taxon>
        <taxon>Methanobacteriati</taxon>
        <taxon>Methanobacteriota</taxon>
        <taxon>Methanomada group</taxon>
        <taxon>Methanobacteria</taxon>
        <taxon>Methanobacteriales</taxon>
        <taxon>Methanobacteriaceae</taxon>
        <taxon>Methanothermobacter</taxon>
    </lineage>
</organism>
<keyword id="KW-0002">3D-structure</keyword>
<keyword id="KW-0106">Calcium</keyword>
<keyword id="KW-0479">Metal-binding</keyword>
<keyword id="KW-1185">Reference proteome</keyword>
<keyword id="KW-0819">tRNA processing</keyword>
<accession>O27635</accession>
<reference key="1">
    <citation type="journal article" date="1997" name="J. Bacteriol.">
        <title>Complete genome sequence of Methanobacterium thermoautotrophicum deltaH: functional analysis and comparative genomics.</title>
        <authorList>
            <person name="Smith D.R."/>
            <person name="Doucette-Stamm L.A."/>
            <person name="Deloughery C."/>
            <person name="Lee H.-M."/>
            <person name="Dubois J."/>
            <person name="Aldredge T."/>
            <person name="Bashirzadeh R."/>
            <person name="Blakely D."/>
            <person name="Cook R."/>
            <person name="Gilbert K."/>
            <person name="Harrison D."/>
            <person name="Hoang L."/>
            <person name="Keagle P."/>
            <person name="Lumm W."/>
            <person name="Pothier B."/>
            <person name="Qiu D."/>
            <person name="Spadafora R."/>
            <person name="Vicare R."/>
            <person name="Wang Y."/>
            <person name="Wierzbowski J."/>
            <person name="Gibson R."/>
            <person name="Jiwani N."/>
            <person name="Caruso A."/>
            <person name="Bush D."/>
            <person name="Safer H."/>
            <person name="Patwell D."/>
            <person name="Prabhakar S."/>
            <person name="McDougall S."/>
            <person name="Shimer G."/>
            <person name="Goyal A."/>
            <person name="Pietrovski S."/>
            <person name="Church G.M."/>
            <person name="Daniels C.J."/>
            <person name="Mao J.-I."/>
            <person name="Rice P."/>
            <person name="Noelling J."/>
            <person name="Reeve J.N."/>
        </authorList>
    </citation>
    <scope>NUCLEOTIDE SEQUENCE [LARGE SCALE GENOMIC DNA]</scope>
    <source>
        <strain>ATCC 29096 / DSM 1053 / JCM 10044 / NBRC 100330 / Delta H</strain>
    </source>
</reference>
<reference key="2">
    <citation type="journal article" date="2004" name="Proteins">
        <title>Predicted role for the archease protein family based on structural and sequence analysis of TM1083 and MTH1598, two proteins structurally characterized through structural genomics efforts.</title>
        <authorList>
            <person name="Canaves J.M."/>
        </authorList>
    </citation>
    <scope>PRELIMINARY FUNCTION</scope>
</reference>
<reference key="3">
    <citation type="journal article" date="2002" name="Proc. Natl. Acad. Sci. U.S.A.">
        <title>An NMR approach to structural proteomics.</title>
        <authorList>
            <person name="Yee A."/>
            <person name="Chang X."/>
            <person name="Pineda-Lucena A."/>
            <person name="Wu B."/>
            <person name="Semesi A."/>
            <person name="Le B."/>
            <person name="Ramelot T."/>
            <person name="Lee G.M."/>
            <person name="Bhattacharyya S."/>
            <person name="Gutierrez P."/>
            <person name="Denisov A."/>
            <person name="Lee C.-H."/>
            <person name="Cort J.R."/>
            <person name="Kozlov G."/>
            <person name="Liao J."/>
            <person name="Finak G."/>
            <person name="Chen L."/>
            <person name="Wishart D."/>
            <person name="Lee W."/>
            <person name="McIntosh L.P."/>
            <person name="Gehring K."/>
            <person name="Kennedy M.A."/>
            <person name="Edwards A.M."/>
            <person name="Arrowsmith C.H."/>
        </authorList>
    </citation>
    <scope>STRUCTURE BY NMR</scope>
</reference>
<protein>
    <recommendedName>
        <fullName evidence="2">Protein archease</fullName>
    </recommendedName>
</protein>
<dbReference type="EMBL" id="AE000666">
    <property type="protein sequence ID" value="AAB86071.1"/>
    <property type="molecule type" value="Genomic_DNA"/>
</dbReference>
<dbReference type="PIR" id="C69080">
    <property type="entry name" value="C69080"/>
</dbReference>
<dbReference type="RefSeq" id="WP_010877206.1">
    <property type="nucleotide sequence ID" value="NC_000916.1"/>
</dbReference>
<dbReference type="PDB" id="1JW3">
    <property type="method" value="NMR"/>
    <property type="chains" value="A=1-140"/>
</dbReference>
<dbReference type="PDBsum" id="1JW3"/>
<dbReference type="BMRB" id="O27635"/>
<dbReference type="SMR" id="O27635"/>
<dbReference type="FunCoup" id="O27635">
    <property type="interactions" value="40"/>
</dbReference>
<dbReference type="STRING" id="187420.MTH_1598"/>
<dbReference type="PaxDb" id="187420-MTH_1598"/>
<dbReference type="EnsemblBacteria" id="AAB86071">
    <property type="protein sequence ID" value="AAB86071"/>
    <property type="gene ID" value="MTH_1598"/>
</dbReference>
<dbReference type="GeneID" id="1471867"/>
<dbReference type="KEGG" id="mth:MTH_1598"/>
<dbReference type="PATRIC" id="fig|187420.15.peg.1561"/>
<dbReference type="HOGENOM" id="CLU_111362_3_0_2"/>
<dbReference type="InParanoid" id="O27635"/>
<dbReference type="EvolutionaryTrace" id="O27635"/>
<dbReference type="Proteomes" id="UP000005223">
    <property type="component" value="Chromosome"/>
</dbReference>
<dbReference type="GO" id="GO:0005509">
    <property type="term" value="F:calcium ion binding"/>
    <property type="evidence" value="ECO:0007669"/>
    <property type="project" value="UniProtKB-UniRule"/>
</dbReference>
<dbReference type="GO" id="GO:0006388">
    <property type="term" value="P:tRNA splicing, via endonucleolytic cleavage and ligation"/>
    <property type="evidence" value="ECO:0007669"/>
    <property type="project" value="UniProtKB-UniRule"/>
</dbReference>
<dbReference type="Gene3D" id="3.55.10.10">
    <property type="entry name" value="Archease domain"/>
    <property type="match status" value="1"/>
</dbReference>
<dbReference type="HAMAP" id="MF_01222">
    <property type="entry name" value="Archease_arch"/>
    <property type="match status" value="1"/>
</dbReference>
<dbReference type="InterPro" id="IPR002804">
    <property type="entry name" value="Archease"/>
</dbReference>
<dbReference type="InterPro" id="IPR022952">
    <property type="entry name" value="Archease_arc"/>
</dbReference>
<dbReference type="InterPro" id="IPR023572">
    <property type="entry name" value="Archease_dom"/>
</dbReference>
<dbReference type="InterPro" id="IPR036820">
    <property type="entry name" value="Archease_dom_sf"/>
</dbReference>
<dbReference type="NCBIfam" id="NF001617">
    <property type="entry name" value="PRK00407.1"/>
    <property type="match status" value="1"/>
</dbReference>
<dbReference type="PANTHER" id="PTHR12682">
    <property type="entry name" value="ARCHEASE"/>
    <property type="match status" value="1"/>
</dbReference>
<dbReference type="PANTHER" id="PTHR12682:SF11">
    <property type="entry name" value="PROTEIN ARCHEASE"/>
    <property type="match status" value="1"/>
</dbReference>
<dbReference type="Pfam" id="PF01951">
    <property type="entry name" value="Archease"/>
    <property type="match status" value="1"/>
</dbReference>
<dbReference type="SUPFAM" id="SSF69819">
    <property type="entry name" value="MTH1598-like"/>
    <property type="match status" value="1"/>
</dbReference>
<sequence>MKGFEFFDVTADAGFWAYGHDLEEVFENAALAMFEVMTDTSLVEAAEERRVEITSEDRVSLLYDWLDELLFIHDTEFILFSKFKVKIDEKDDGLHLTGTAMGEEIKEGHERRDEVKAVTFHMMEILDEDGLIKARVILDL</sequence>
<feature type="chain" id="PRO_0000068846" description="Protein archease">
    <location>
        <begin position="1"/>
        <end position="140"/>
    </location>
</feature>
<feature type="binding site" evidence="1">
    <location>
        <position position="12"/>
    </location>
    <ligand>
        <name>Ca(2+)</name>
        <dbReference type="ChEBI" id="CHEBI:29108"/>
    </ligand>
</feature>
<feature type="binding site" evidence="1">
    <location>
        <position position="139"/>
    </location>
    <ligand>
        <name>Ca(2+)</name>
        <dbReference type="ChEBI" id="CHEBI:29108"/>
    </ligand>
</feature>
<feature type="binding site" evidence="1">
    <location>
        <position position="140"/>
    </location>
    <ligand>
        <name>Ca(2+)</name>
        <dbReference type="ChEBI" id="CHEBI:29108"/>
    </ligand>
</feature>
<feature type="strand" evidence="3">
    <location>
        <begin position="4"/>
        <end position="6"/>
    </location>
</feature>
<feature type="strand" evidence="3">
    <location>
        <begin position="10"/>
        <end position="18"/>
    </location>
</feature>
<feature type="strand" evidence="3">
    <location>
        <begin position="20"/>
        <end position="22"/>
    </location>
</feature>
<feature type="helix" evidence="3">
    <location>
        <begin position="23"/>
        <end position="37"/>
    </location>
</feature>
<feature type="strand" evidence="3">
    <location>
        <begin position="48"/>
        <end position="58"/>
    </location>
</feature>
<feature type="helix" evidence="3">
    <location>
        <begin position="59"/>
        <end position="75"/>
    </location>
</feature>
<feature type="strand" evidence="3">
    <location>
        <begin position="84"/>
        <end position="89"/>
    </location>
</feature>
<feature type="strand" evidence="3">
    <location>
        <begin position="91"/>
        <end position="101"/>
    </location>
</feature>
<feature type="strand" evidence="3">
    <location>
        <begin position="124"/>
        <end position="128"/>
    </location>
</feature>
<feature type="strand" evidence="3">
    <location>
        <begin position="131"/>
        <end position="139"/>
    </location>
</feature>
<evidence type="ECO:0000250" key="1"/>
<evidence type="ECO:0000255" key="2">
    <source>
        <dbReference type="HAMAP-Rule" id="MF_01222"/>
    </source>
</evidence>
<evidence type="ECO:0007829" key="3">
    <source>
        <dbReference type="PDB" id="1JW3"/>
    </source>
</evidence>
<proteinExistence type="evidence at protein level"/>
<comment type="function">
    <text evidence="1">Activates the tRNA-splicing ligase complex by facilitating the enzymatic turnover of catalytic subunit RtcB. Acts by promoting the guanylylation of RtcB, a key intermediate step in tRNA ligation. Can also alter the NTP specificity of RtcB such that ATP, dGTP or ITP is used efficiently (By similarity). May also act as a chaperone or modulator of proteins involved in DNA or RNA processing.</text>
</comment>
<comment type="similarity">
    <text evidence="2">Belongs to the archease family.</text>
</comment>
<name>ARCH_METTH</name>